<dbReference type="EMBL" id="FM180568">
    <property type="protein sequence ID" value="CAS08858.1"/>
    <property type="molecule type" value="Genomic_DNA"/>
</dbReference>
<dbReference type="RefSeq" id="WP_000340206.1">
    <property type="nucleotide sequence ID" value="NC_011601.1"/>
</dbReference>
<dbReference type="SMR" id="B7UQ75"/>
<dbReference type="KEGG" id="ecg:E2348C_1310"/>
<dbReference type="HOGENOM" id="CLU_005912_9_2_6"/>
<dbReference type="Proteomes" id="UP000008205">
    <property type="component" value="Chromosome"/>
</dbReference>
<dbReference type="GO" id="GO:0005886">
    <property type="term" value="C:plasma membrane"/>
    <property type="evidence" value="ECO:0007669"/>
    <property type="project" value="UniProtKB-SubCell"/>
</dbReference>
<dbReference type="GO" id="GO:0050660">
    <property type="term" value="F:flavin adenine dinucleotide binding"/>
    <property type="evidence" value="ECO:0007669"/>
    <property type="project" value="InterPro"/>
</dbReference>
<dbReference type="GO" id="GO:0015386">
    <property type="term" value="F:potassium:proton antiporter activity"/>
    <property type="evidence" value="ECO:0007669"/>
    <property type="project" value="UniProtKB-UniRule"/>
</dbReference>
<dbReference type="GO" id="GO:0006884">
    <property type="term" value="P:cell volume homeostasis"/>
    <property type="evidence" value="ECO:0007669"/>
    <property type="project" value="InterPro"/>
</dbReference>
<dbReference type="FunFam" id="1.20.1530.20:FF:000002">
    <property type="entry name" value="K(+)/H(+) antiporter NhaP2"/>
    <property type="match status" value="1"/>
</dbReference>
<dbReference type="FunFam" id="3.30.465.10:FF:000009">
    <property type="entry name" value="K(+)/H(+) antiporter NhaP2"/>
    <property type="match status" value="1"/>
</dbReference>
<dbReference type="FunFam" id="3.30.70.1450:FF:000007">
    <property type="entry name" value="K(+)/H(+) antiporter NhaP2"/>
    <property type="match status" value="1"/>
</dbReference>
<dbReference type="Gene3D" id="1.20.1530.20">
    <property type="match status" value="1"/>
</dbReference>
<dbReference type="Gene3D" id="3.30.465.10">
    <property type="match status" value="1"/>
</dbReference>
<dbReference type="Gene3D" id="3.30.70.1450">
    <property type="entry name" value="Regulator of K+ conductance, C-terminal domain"/>
    <property type="match status" value="1"/>
</dbReference>
<dbReference type="HAMAP" id="MF_01075">
    <property type="entry name" value="NhaP2"/>
    <property type="match status" value="1"/>
</dbReference>
<dbReference type="InterPro" id="IPR006153">
    <property type="entry name" value="Cation/H_exchanger_TM"/>
</dbReference>
<dbReference type="InterPro" id="IPR036318">
    <property type="entry name" value="FAD-bd_PCMH-like_sf"/>
</dbReference>
<dbReference type="InterPro" id="IPR016169">
    <property type="entry name" value="FAD-bd_PCMH_sub2"/>
</dbReference>
<dbReference type="InterPro" id="IPR038770">
    <property type="entry name" value="Na+/solute_symporter_sf"/>
</dbReference>
<dbReference type="InterPro" id="IPR023729">
    <property type="entry name" value="NhaP2"/>
</dbReference>
<dbReference type="InterPro" id="IPR006037">
    <property type="entry name" value="RCK_C"/>
</dbReference>
<dbReference type="InterPro" id="IPR036721">
    <property type="entry name" value="RCK_C_sf"/>
</dbReference>
<dbReference type="InterPro" id="IPR005170">
    <property type="entry name" value="Transptr-assoc_dom"/>
</dbReference>
<dbReference type="NCBIfam" id="NF003714">
    <property type="entry name" value="PRK05326.1-1"/>
    <property type="match status" value="1"/>
</dbReference>
<dbReference type="NCBIfam" id="NF003715">
    <property type="entry name" value="PRK05326.1-2"/>
    <property type="match status" value="1"/>
</dbReference>
<dbReference type="NCBIfam" id="NF003716">
    <property type="entry name" value="PRK05326.1-3"/>
    <property type="match status" value="1"/>
</dbReference>
<dbReference type="PANTHER" id="PTHR32507:SF7">
    <property type="entry name" value="K(+)_H(+) ANTIPORTER NHAP2"/>
    <property type="match status" value="1"/>
</dbReference>
<dbReference type="PANTHER" id="PTHR32507">
    <property type="entry name" value="NA(+)/H(+) ANTIPORTER 1"/>
    <property type="match status" value="1"/>
</dbReference>
<dbReference type="Pfam" id="PF03471">
    <property type="entry name" value="CorC_HlyC"/>
    <property type="match status" value="1"/>
</dbReference>
<dbReference type="Pfam" id="PF00999">
    <property type="entry name" value="Na_H_Exchanger"/>
    <property type="match status" value="1"/>
</dbReference>
<dbReference type="Pfam" id="PF02080">
    <property type="entry name" value="TrkA_C"/>
    <property type="match status" value="1"/>
</dbReference>
<dbReference type="SMART" id="SM01091">
    <property type="entry name" value="CorC_HlyC"/>
    <property type="match status" value="1"/>
</dbReference>
<dbReference type="SUPFAM" id="SSF56176">
    <property type="entry name" value="FAD-binding/transporter-associated domain-like"/>
    <property type="match status" value="1"/>
</dbReference>
<dbReference type="SUPFAM" id="SSF116726">
    <property type="entry name" value="TrkA C-terminal domain-like"/>
    <property type="match status" value="1"/>
</dbReference>
<dbReference type="PROSITE" id="PS51202">
    <property type="entry name" value="RCK_C"/>
    <property type="match status" value="1"/>
</dbReference>
<keyword id="KW-0050">Antiport</keyword>
<keyword id="KW-0997">Cell inner membrane</keyword>
<keyword id="KW-1003">Cell membrane</keyword>
<keyword id="KW-0406">Ion transport</keyword>
<keyword id="KW-0472">Membrane</keyword>
<keyword id="KW-0630">Potassium</keyword>
<keyword id="KW-0633">Potassium transport</keyword>
<keyword id="KW-1185">Reference proteome</keyword>
<keyword id="KW-0812">Transmembrane</keyword>
<keyword id="KW-1133">Transmembrane helix</keyword>
<keyword id="KW-0813">Transport</keyword>
<reference key="1">
    <citation type="journal article" date="2009" name="J. Bacteriol.">
        <title>Complete genome sequence and comparative genome analysis of enteropathogenic Escherichia coli O127:H6 strain E2348/69.</title>
        <authorList>
            <person name="Iguchi A."/>
            <person name="Thomson N.R."/>
            <person name="Ogura Y."/>
            <person name="Saunders D."/>
            <person name="Ooka T."/>
            <person name="Henderson I.R."/>
            <person name="Harris D."/>
            <person name="Asadulghani M."/>
            <person name="Kurokawa K."/>
            <person name="Dean P."/>
            <person name="Kenny B."/>
            <person name="Quail M.A."/>
            <person name="Thurston S."/>
            <person name="Dougan G."/>
            <person name="Hayashi T."/>
            <person name="Parkhill J."/>
            <person name="Frankel G."/>
        </authorList>
    </citation>
    <scope>NUCLEOTIDE SEQUENCE [LARGE SCALE GENOMIC DNA]</scope>
    <source>
        <strain>E2348/69 / EPEC</strain>
    </source>
</reference>
<comment type="function">
    <text evidence="1">K(+)/H(+) antiporter that extrudes potassium in exchange for external protons and maintains the internal concentration of potassium under toxic levels.</text>
</comment>
<comment type="catalytic activity">
    <reaction evidence="1">
        <text>K(+)(in) + H(+)(out) = K(+)(out) + H(+)(in)</text>
        <dbReference type="Rhea" id="RHEA:29467"/>
        <dbReference type="ChEBI" id="CHEBI:15378"/>
        <dbReference type="ChEBI" id="CHEBI:29103"/>
    </reaction>
    <physiologicalReaction direction="left-to-right" evidence="1">
        <dbReference type="Rhea" id="RHEA:29468"/>
    </physiologicalReaction>
</comment>
<comment type="subcellular location">
    <subcellularLocation>
        <location evidence="1">Cell inner membrane</location>
        <topology evidence="1">Multi-pass membrane protein</topology>
    </subcellularLocation>
</comment>
<comment type="similarity">
    <text evidence="1">Belongs to the monovalent cation:proton antiporter 1 (CPA1) transporter (TC 2.A.36) family. NhaP2 subfamily.</text>
</comment>
<sequence>MDATTIISLFILGSILVTSSILLSSFSSRLGIPILVIFLAIGMLAGVDGVGGIPFDNYPFAYMVSNLALAIILLDGGMRTQASSFRVALGPALSLATLGVLITSGLTGMMAAWLFNLDLIEGLLIGAIVGSTDAAAVFSLLGGKGLNERVGSTLEIESGSNDPMAVFLTITLIAMIQQHESSVSWMFVVDILQQFGLGIVIGLGGGYLLLQMINRIALPAGLYPLLALSGGILIFALTTALEGSGILAVYLCGFLLGNRPIRNRYGILQNFDGLAWLAQIAMFLVLGLLVNPSDLLPIAIPALILSAWMIFFARPLSVFAGLLPFRGFNLRERVFISWVGLRGAVPIILAVFPMMAGLENARLFFNVAFFVVLVSLLLQGTSLSWAAKKAKVVVPPVGRPVSRVGLDIHPENPWEQFVYQLSADKWCVGAALRDLHMPKETRIAALFRDNQLLHPTGSTRLREGDVLCVIGRERDLPALGKLFSQSPPVALDQRFFGDFILEASAKYADVALIYGLEDGREYRDKQQTLGEIVQQLLGAAPVVGDQVEFAGMIWTVAEKEDNEVLKIGVRVAEEEAES</sequence>
<gene>
    <name evidence="1" type="primary">nhaP2</name>
    <name type="synonym">cvrA</name>
    <name type="ordered locus">E2348C_1310</name>
</gene>
<feature type="chain" id="PRO_1000149771" description="K(+)/H(+) antiporter NhaP2">
    <location>
        <begin position="1"/>
        <end position="578"/>
    </location>
</feature>
<feature type="transmembrane region" description="Helical" evidence="1">
    <location>
        <begin position="6"/>
        <end position="26"/>
    </location>
</feature>
<feature type="transmembrane region" description="Helical" evidence="1">
    <location>
        <begin position="30"/>
        <end position="50"/>
    </location>
</feature>
<feature type="transmembrane region" description="Helical" evidence="1">
    <location>
        <begin position="58"/>
        <end position="78"/>
    </location>
</feature>
<feature type="transmembrane region" description="Helical" evidence="1">
    <location>
        <begin position="87"/>
        <end position="107"/>
    </location>
</feature>
<feature type="transmembrane region" description="Helical" evidence="1">
    <location>
        <begin position="109"/>
        <end position="129"/>
    </location>
</feature>
<feature type="transmembrane region" description="Helical" evidence="1">
    <location>
        <begin position="156"/>
        <end position="176"/>
    </location>
</feature>
<feature type="transmembrane region" description="Helical" evidence="1">
    <location>
        <begin position="185"/>
        <end position="205"/>
    </location>
</feature>
<feature type="transmembrane region" description="Helical" evidence="1">
    <location>
        <begin position="216"/>
        <end position="236"/>
    </location>
</feature>
<feature type="transmembrane region" description="Helical" evidence="1">
    <location>
        <begin position="237"/>
        <end position="257"/>
    </location>
</feature>
<feature type="transmembrane region" description="Helical" evidence="1">
    <location>
        <begin position="270"/>
        <end position="290"/>
    </location>
</feature>
<feature type="transmembrane region" description="Helical" evidence="1">
    <location>
        <begin position="293"/>
        <end position="313"/>
    </location>
</feature>
<feature type="transmembrane region" description="Helical" evidence="1">
    <location>
        <begin position="334"/>
        <end position="354"/>
    </location>
</feature>
<feature type="transmembrane region" description="Helical" evidence="1">
    <location>
        <begin position="363"/>
        <end position="383"/>
    </location>
</feature>
<feature type="domain" description="RCK C-terminal" evidence="1">
    <location>
        <begin position="403"/>
        <end position="485"/>
    </location>
</feature>
<organism>
    <name type="scientific">Escherichia coli O127:H6 (strain E2348/69 / EPEC)</name>
    <dbReference type="NCBI Taxonomy" id="574521"/>
    <lineage>
        <taxon>Bacteria</taxon>
        <taxon>Pseudomonadati</taxon>
        <taxon>Pseudomonadota</taxon>
        <taxon>Gammaproteobacteria</taxon>
        <taxon>Enterobacterales</taxon>
        <taxon>Enterobacteriaceae</taxon>
        <taxon>Escherichia</taxon>
    </lineage>
</organism>
<accession>B7UQ75</accession>
<proteinExistence type="inferred from homology"/>
<protein>
    <recommendedName>
        <fullName evidence="1">K(+)/H(+) antiporter NhaP2</fullName>
    </recommendedName>
    <alternativeName>
        <fullName evidence="1">Potassium/proton antiporter NhaP2</fullName>
    </alternativeName>
</protein>
<name>NHAP2_ECO27</name>
<evidence type="ECO:0000255" key="1">
    <source>
        <dbReference type="HAMAP-Rule" id="MF_01075"/>
    </source>
</evidence>